<dbReference type="EC" id="3.4.11.2" evidence="10"/>
<dbReference type="EMBL" id="U77083">
    <property type="protein sequence ID" value="AAB19065.1"/>
    <property type="molecule type" value="mRNA"/>
</dbReference>
<dbReference type="EMBL" id="BC005431">
    <property type="protein sequence ID" value="AAH05431.1"/>
    <property type="molecule type" value="mRNA"/>
</dbReference>
<dbReference type="EMBL" id="BC017011">
    <property type="protein sequence ID" value="AAH17011.1"/>
    <property type="molecule type" value="mRNA"/>
</dbReference>
<dbReference type="EMBL" id="BC040792">
    <property type="protein sequence ID" value="AAH40792.1"/>
    <property type="molecule type" value="mRNA"/>
</dbReference>
<dbReference type="CCDS" id="CCDS21388.1"/>
<dbReference type="RefSeq" id="NP_032512.2">
    <property type="nucleotide sequence ID" value="NM_008486.3"/>
</dbReference>
<dbReference type="RefSeq" id="XP_006540741.1">
    <property type="nucleotide sequence ID" value="XM_006540678.3"/>
</dbReference>
<dbReference type="RefSeq" id="XP_036008613.1">
    <property type="nucleotide sequence ID" value="XM_036152720.1"/>
</dbReference>
<dbReference type="SMR" id="P97449"/>
<dbReference type="FunCoup" id="P97449">
    <property type="interactions" value="253"/>
</dbReference>
<dbReference type="IntAct" id="P97449">
    <property type="interactions" value="8"/>
</dbReference>
<dbReference type="MINT" id="P97449"/>
<dbReference type="STRING" id="10090.ENSMUSP00000103015"/>
<dbReference type="BindingDB" id="P97449"/>
<dbReference type="ChEMBL" id="CHEMBL2189140"/>
<dbReference type="DrugCentral" id="P97449"/>
<dbReference type="GuidetoPHARMACOLOGY" id="1560"/>
<dbReference type="MEROPS" id="M01.001"/>
<dbReference type="GlyConnect" id="2126">
    <property type="glycosylation" value="6 N-Linked glycans (3 sites)"/>
</dbReference>
<dbReference type="GlyCosmos" id="P97449">
    <property type="glycosylation" value="13 sites, 6 glycans"/>
</dbReference>
<dbReference type="GlyGen" id="P97449">
    <property type="glycosylation" value="13 sites, 13 N-linked glycans (7 sites)"/>
</dbReference>
<dbReference type="iPTMnet" id="P97449"/>
<dbReference type="PhosphoSitePlus" id="P97449"/>
<dbReference type="SwissPalm" id="P97449"/>
<dbReference type="jPOST" id="P97449"/>
<dbReference type="PaxDb" id="10090-ENSMUSP00000103015"/>
<dbReference type="PeptideAtlas" id="P97449"/>
<dbReference type="ProteomicsDB" id="281971"/>
<dbReference type="Pumba" id="P97449"/>
<dbReference type="Antibodypedia" id="3713">
    <property type="antibodies" value="1993 antibodies from 48 providers"/>
</dbReference>
<dbReference type="DNASU" id="16790"/>
<dbReference type="Ensembl" id="ENSMUST00000049004.8">
    <property type="protein sequence ID" value="ENSMUSP00000035943.7"/>
    <property type="gene ID" value="ENSMUSG00000039062.16"/>
</dbReference>
<dbReference type="Ensembl" id="ENSMUST00000107392.8">
    <property type="protein sequence ID" value="ENSMUSP00000103015.2"/>
    <property type="gene ID" value="ENSMUSG00000039062.16"/>
</dbReference>
<dbReference type="GeneID" id="16790"/>
<dbReference type="KEGG" id="mmu:16790"/>
<dbReference type="UCSC" id="uc009hzd.1">
    <property type="organism name" value="mouse"/>
</dbReference>
<dbReference type="AGR" id="MGI:5000466"/>
<dbReference type="CTD" id="290"/>
<dbReference type="MGI" id="MGI:5000466">
    <property type="gene designation" value="Anpep"/>
</dbReference>
<dbReference type="VEuPathDB" id="HostDB:ENSMUSG00000039062"/>
<dbReference type="eggNOG" id="KOG1046">
    <property type="taxonomic scope" value="Eukaryota"/>
</dbReference>
<dbReference type="GeneTree" id="ENSGT00940000154876"/>
<dbReference type="HOGENOM" id="CLU_003705_2_2_1"/>
<dbReference type="InParanoid" id="P97449"/>
<dbReference type="OMA" id="EETEYMP"/>
<dbReference type="OrthoDB" id="510539at2759"/>
<dbReference type="PhylomeDB" id="P97449"/>
<dbReference type="TreeFam" id="TF300395"/>
<dbReference type="Reactome" id="R-MMU-6798695">
    <property type="pathway name" value="Neutrophil degranulation"/>
</dbReference>
<dbReference type="BioGRID-ORCS" id="16790">
    <property type="hits" value="0 hits in 77 CRISPR screens"/>
</dbReference>
<dbReference type="ChiTaRS" id="Anpep">
    <property type="organism name" value="mouse"/>
</dbReference>
<dbReference type="PRO" id="PR:P97449"/>
<dbReference type="Proteomes" id="UP000000589">
    <property type="component" value="Chromosome 7"/>
</dbReference>
<dbReference type="RNAct" id="P97449">
    <property type="molecule type" value="protein"/>
</dbReference>
<dbReference type="Bgee" id="ENSMUSG00000039062">
    <property type="expression patterns" value="Expressed in small intestine Peyer's patch and 183 other cell types or tissues"/>
</dbReference>
<dbReference type="ExpressionAtlas" id="P97449">
    <property type="expression patterns" value="baseline and differential"/>
</dbReference>
<dbReference type="GO" id="GO:0005793">
    <property type="term" value="C:endoplasmic reticulum-Golgi intermediate compartment"/>
    <property type="evidence" value="ECO:0007669"/>
    <property type="project" value="Ensembl"/>
</dbReference>
<dbReference type="GO" id="GO:0009897">
    <property type="term" value="C:external side of plasma membrane"/>
    <property type="evidence" value="ECO:0000314"/>
    <property type="project" value="MGI"/>
</dbReference>
<dbReference type="GO" id="GO:0070062">
    <property type="term" value="C:extracellular exosome"/>
    <property type="evidence" value="ECO:0007669"/>
    <property type="project" value="Ensembl"/>
</dbReference>
<dbReference type="GO" id="GO:0016285">
    <property type="term" value="F:alanyl aminopeptidase activity"/>
    <property type="evidence" value="ECO:0007669"/>
    <property type="project" value="UniProtKB-EC"/>
</dbReference>
<dbReference type="GO" id="GO:0008237">
    <property type="term" value="F:metallopeptidase activity"/>
    <property type="evidence" value="ECO:0000315"/>
    <property type="project" value="MGI"/>
</dbReference>
<dbReference type="GO" id="GO:0008270">
    <property type="term" value="F:zinc ion binding"/>
    <property type="evidence" value="ECO:0007669"/>
    <property type="project" value="InterPro"/>
</dbReference>
<dbReference type="GO" id="GO:0001525">
    <property type="term" value="P:angiogenesis"/>
    <property type="evidence" value="ECO:0007669"/>
    <property type="project" value="UniProtKB-KW"/>
</dbReference>
<dbReference type="GO" id="GO:0002003">
    <property type="term" value="P:angiotensin maturation"/>
    <property type="evidence" value="ECO:0000315"/>
    <property type="project" value="MGI"/>
</dbReference>
<dbReference type="GO" id="GO:0030154">
    <property type="term" value="P:cell differentiation"/>
    <property type="evidence" value="ECO:0007669"/>
    <property type="project" value="UniProtKB-KW"/>
</dbReference>
<dbReference type="CDD" id="cd09601">
    <property type="entry name" value="M1_APN-Q_like"/>
    <property type="match status" value="1"/>
</dbReference>
<dbReference type="FunFam" id="2.60.40.1910:FF:000005">
    <property type="entry name" value="Aminopeptidase"/>
    <property type="match status" value="1"/>
</dbReference>
<dbReference type="FunFam" id="1.25.50.20:FF:000012">
    <property type="entry name" value="Aminopeptidase N"/>
    <property type="match status" value="1"/>
</dbReference>
<dbReference type="FunFam" id="2.60.40.1730:FF:000012">
    <property type="entry name" value="Aminopeptidase N"/>
    <property type="match status" value="1"/>
</dbReference>
<dbReference type="FunFam" id="1.10.390.10:FF:000016">
    <property type="entry name" value="Glutamyl aminopeptidase"/>
    <property type="match status" value="1"/>
</dbReference>
<dbReference type="Gene3D" id="1.25.50.20">
    <property type="match status" value="1"/>
</dbReference>
<dbReference type="Gene3D" id="2.60.40.1910">
    <property type="match status" value="1"/>
</dbReference>
<dbReference type="Gene3D" id="1.10.390.10">
    <property type="entry name" value="Neutral Protease Domain 2"/>
    <property type="match status" value="1"/>
</dbReference>
<dbReference type="Gene3D" id="2.60.40.1730">
    <property type="entry name" value="tricorn interacting facor f3 domain"/>
    <property type="match status" value="1"/>
</dbReference>
<dbReference type="InterPro" id="IPR045357">
    <property type="entry name" value="Aminopeptidase_N-like_N"/>
</dbReference>
<dbReference type="InterPro" id="IPR042097">
    <property type="entry name" value="Aminopeptidase_N-like_N_sf"/>
</dbReference>
<dbReference type="InterPro" id="IPR024571">
    <property type="entry name" value="ERAP1-like_C_dom"/>
</dbReference>
<dbReference type="InterPro" id="IPR034016">
    <property type="entry name" value="M1_APN-typ"/>
</dbReference>
<dbReference type="InterPro" id="IPR001930">
    <property type="entry name" value="Peptidase_M1"/>
</dbReference>
<dbReference type="InterPro" id="IPR050344">
    <property type="entry name" value="Peptidase_M1_aminopeptidases"/>
</dbReference>
<dbReference type="InterPro" id="IPR014782">
    <property type="entry name" value="Peptidase_M1_dom"/>
</dbReference>
<dbReference type="InterPro" id="IPR027268">
    <property type="entry name" value="Peptidase_M4/M1_CTD_sf"/>
</dbReference>
<dbReference type="PANTHER" id="PTHR11533:SF172">
    <property type="entry name" value="AMINOPEPTIDASE N"/>
    <property type="match status" value="1"/>
</dbReference>
<dbReference type="PANTHER" id="PTHR11533">
    <property type="entry name" value="PROTEASE M1 ZINC METALLOPROTEASE"/>
    <property type="match status" value="1"/>
</dbReference>
<dbReference type="Pfam" id="PF11838">
    <property type="entry name" value="ERAP1_C"/>
    <property type="match status" value="1"/>
</dbReference>
<dbReference type="Pfam" id="PF01433">
    <property type="entry name" value="Peptidase_M1"/>
    <property type="match status" value="1"/>
</dbReference>
<dbReference type="Pfam" id="PF17900">
    <property type="entry name" value="Peptidase_M1_N"/>
    <property type="match status" value="1"/>
</dbReference>
<dbReference type="PRINTS" id="PR00756">
    <property type="entry name" value="ALADIPTASE"/>
</dbReference>
<dbReference type="SUPFAM" id="SSF63737">
    <property type="entry name" value="Leukotriene A4 hydrolase N-terminal domain"/>
    <property type="match status" value="1"/>
</dbReference>
<dbReference type="SUPFAM" id="SSF55486">
    <property type="entry name" value="Metalloproteases ('zincins'), catalytic domain"/>
    <property type="match status" value="1"/>
</dbReference>
<dbReference type="PROSITE" id="PS00142">
    <property type="entry name" value="ZINC_PROTEASE"/>
    <property type="match status" value="1"/>
</dbReference>
<sequence length="966" mass="109651">MAKGFYISKTLGILGILLGVAAVCTIIALSVVYAQEKNRNAENSATAPTLPGSTSATTATTTPAVDESKPWNQYRLPKTLIPDSYRVILRPYLTPNNQGLYIFQGNSTVRFTCNQTTDVIIIHSKKLNYTLKGNHRVVLRTLDGTPAPNIDKTELVERTEYLVVHLQGSLVEGRQYEMDSQFQGELADDLAGFYRSEYMEGDVKKVVATTQMQAADARKSFPCFDEPAMKAMFNITLIYPNNLIALSNMLPKESKPYPEDPSCTMTEFHSTPKMSTYLLAYIVSEFKNISSVSANGVQIGIWARPSAIDEGQGDYALNVTGPILNFFAQHYNTSYPLPKSDQIALPDFNAGAMENWGLVTYRESSLVFDSQSSSISNKERVVTVIAHELAHQWFGNLVTVAWWNDLWLNEGFASYVEYLGADYAEPTWNLKDLMVLNDVYRVMAVDALASSHPLSSPADEIKTPDQIMELFDSITYSKGASVIRMLSSFLTEDLFKKGLSSYLHTYQYSNTVYLDLWEHLQKAVNQQTAVQPPATVRTIMDRWILQMGFPVITVNTNTGEISQKHFLLDSKSNVTRPSEFNYIWIAPIPFLKSGQEDHYWLDVEKNQSAKFQTSSNEWILLNINVTGYYLVNYDENNWKKLQNQLQTDLSVIPVINRAQIIHDSFNLASAKMIPITLALDNTLFLVKEAEYMPWQAALSSLNYFTLMFDRSEVYGPMKRYLKKQVTPLFFYFQNRTNNWVNRPPTLMEQYNEINAISTACSSGLKECRDLVVELYSQWMKNPNNNTIHPNLRSTVYCNAIAFGGEEEWNFAWEQFRNATLVNEADKLRSALACSKDVWILNRYLSYTLNPDYIRKQDTTSTIISIASNVAGHPLVWDFVRSNWKKLFENYGGGSFSFANLIQGVTRRFSSEFELQQLEQFKADNSATGFGTGTRALEQALEKTRANIDWVKENKDAVFKWFTENSS</sequence>
<protein>
    <recommendedName>
        <fullName evidence="12">Aminopeptidase N</fullName>
        <shortName>AP-N</shortName>
        <shortName>mAPN</shortName>
        <ecNumber evidence="10">3.4.11.2</ecNumber>
    </recommendedName>
    <alternativeName>
        <fullName>Alanyl aminopeptidase</fullName>
    </alternativeName>
    <alternativeName>
        <fullName>Aminopeptidase M</fullName>
        <shortName>AP-M</shortName>
    </alternativeName>
    <alternativeName>
        <fullName>Membrane protein p161</fullName>
    </alternativeName>
    <alternativeName>
        <fullName>Microsomal aminopeptidase</fullName>
    </alternativeName>
    <cdAntigenName>CD13</cdAntigenName>
</protein>
<organism>
    <name type="scientific">Mus musculus</name>
    <name type="common">Mouse</name>
    <dbReference type="NCBI Taxonomy" id="10090"/>
    <lineage>
        <taxon>Eukaryota</taxon>
        <taxon>Metazoa</taxon>
        <taxon>Chordata</taxon>
        <taxon>Craniata</taxon>
        <taxon>Vertebrata</taxon>
        <taxon>Euteleostomi</taxon>
        <taxon>Mammalia</taxon>
        <taxon>Eutheria</taxon>
        <taxon>Euarchontoglires</taxon>
        <taxon>Glires</taxon>
        <taxon>Rodentia</taxon>
        <taxon>Myomorpha</taxon>
        <taxon>Muroidea</taxon>
        <taxon>Muridae</taxon>
        <taxon>Murinae</taxon>
        <taxon>Mus</taxon>
        <taxon>Mus</taxon>
    </lineage>
</organism>
<comment type="function">
    <text evidence="1 8 10">Broad specificity aminopeptidase which plays a role in the final digestion of peptides generated from hydrolysis of proteins by gastric and pancreatic proteases. Also involved in the processing of various peptides including peptide hormones, such as angiotensin III and IV, neuropeptides, and chemokines (By similarity). May also be involved the cleavage of peptides bound to major histocompatibility complex class II molecules of antigen presenting cells (PubMed:8691132). May have a role in angiogenesis and promote cholesterol crystallization (By similarity). May have a role in amino acid transport by acting as binding partner of amino acid transporter SLC6A19 and regulating its activity (PubMed:22677001).</text>
</comment>
<comment type="catalytic activity">
    <reaction evidence="10">
        <text>Release of an N-terminal amino acid, Xaa-|-Yaa- from a peptide, amide or arylamide. Xaa is preferably Ala, but may be most amino acids including Pro (slow action). When a terminal hydrophobic residue is followed by a prolyl residue, the two may be released as an intact Xaa-Pro dipeptide.</text>
        <dbReference type="EC" id="3.4.11.2"/>
    </reaction>
</comment>
<comment type="cofactor">
    <cofactor evidence="1">
        <name>Zn(2+)</name>
        <dbReference type="ChEBI" id="CHEBI:29105"/>
    </cofactor>
    <text evidence="1">Binds 1 zinc ion per subunit.</text>
</comment>
<comment type="subunit">
    <text evidence="1 8">Homodimer (By similarity). Interacts with SLC6A19 (PubMed:22677001).</text>
</comment>
<comment type="subcellular location">
    <subcellularLocation>
        <location evidence="11">Cell membrane</location>
        <topology evidence="1">Single-pass type II membrane protein</topology>
    </subcellularLocation>
    <text evidence="1">Also found as a soluble form.</text>
</comment>
<comment type="tissue specificity">
    <text evidence="8 9 11">Expressed in the intestinal brush border (at protein level) (PubMed:22677001). Highly expressed in intestinal tract and kidney, present in liver, lymph node, spleen, and brain (PubMed:8103749, PubMed:8805662). Found as well in monocytes, macrophages, dendritic cells, veiled cells and B-cells but not on T-cells and thymocytes (PubMed:8103749).</text>
</comment>
<comment type="PTM">
    <text evidence="11">N- and O-glycosylated.</text>
</comment>
<comment type="PTM">
    <text evidence="2">Sulfated.</text>
</comment>
<comment type="PTM">
    <text evidence="1">May undergo proteolysis and give rise to a soluble form.</text>
</comment>
<comment type="similarity">
    <text evidence="12">Belongs to the peptidase M1 family.</text>
</comment>
<accession>P97449</accession>
<accession>Q91YH8</accession>
<accession>Q99K63</accession>
<reference key="1">
    <citation type="journal article" date="1996" name="J. Immunol.">
        <title>p161, a murine membrane protein expressed on mast cells and some macrophages, is mouse CD13/aminopeptidase N.</title>
        <authorList>
            <person name="Chen H."/>
            <person name="Kinzer C.A."/>
            <person name="Paul W.E."/>
        </authorList>
    </citation>
    <scope>NUCLEOTIDE SEQUENCE [MRNA]</scope>
    <scope>PROTEIN SEQUENCE OF 538-564; 886-908; 922-942 AND 961-965</scope>
    <scope>SUBCELLULAR LOCATION</scope>
    <scope>GLYCOSYLATION</scope>
    <scope>TISSUE SPECIFICITY</scope>
</reference>
<reference key="2">
    <citation type="journal article" date="2004" name="Genome Res.">
        <title>The status, quality, and expansion of the NIH full-length cDNA project: the Mammalian Gene Collection (MGC).</title>
        <authorList>
            <consortium name="The MGC Project Team"/>
        </authorList>
    </citation>
    <scope>NUCLEOTIDE SEQUENCE [LARGE SCALE MRNA]</scope>
    <source>
        <strain>Czech II</strain>
        <strain>FVB/N</strain>
        <tissue>Mammary tumor</tissue>
    </source>
</reference>
<reference key="3">
    <citation type="journal article" date="1993" name="Eur. J. Immunol.">
        <title>A mouse aminopeptidase N is a marker for antigen-presenting cells and appears to be co-expressed with major histocompatibility complex class II molecules.</title>
        <authorList>
            <person name="Hansen A.S."/>
            <person name="Noren O."/>
            <person name="Sjostrom H."/>
            <person name="Werdelin O."/>
        </authorList>
    </citation>
    <scope>TISSUE SPECIFICITY</scope>
</reference>
<reference key="4">
    <citation type="journal article" date="1996" name="J. Exp. Med.">
        <title>T cell responses affected by aminopeptidase N (CD13)-mediated trimming of major histocompatibility complex class II-bound peptides.</title>
        <authorList>
            <person name="Larsen S.L."/>
            <person name="Pedersen L.O."/>
            <person name="Buus S."/>
            <person name="Stryhn A."/>
        </authorList>
    </citation>
    <scope>FUNCTION IN ENZYMATIC CLEAVAGE OF ANTIGEN PEPTIDES BOUND TO CLASS II MHC</scope>
    <scope>CATALYTIC ACTIVITY</scope>
</reference>
<reference key="5">
    <citation type="journal article" date="2007" name="J. Immunol.">
        <title>Quantitative time-resolved phosphoproteomic analysis of mast cell signaling.</title>
        <authorList>
            <person name="Cao L."/>
            <person name="Yu K."/>
            <person name="Banh C."/>
            <person name="Nguyen V."/>
            <person name="Ritz A."/>
            <person name="Raphael B.J."/>
            <person name="Kawakami Y."/>
            <person name="Kawakami T."/>
            <person name="Salomon A.R."/>
        </authorList>
    </citation>
    <scope>PHOSPHORYLATION [LARGE SCALE ANALYSIS] AT TYR-852</scope>
    <scope>IDENTIFICATION BY MASS SPECTROMETRY [LARGE SCALE ANALYSIS]</scope>
    <source>
        <tissue>Mast cell</tissue>
    </source>
</reference>
<reference key="6">
    <citation type="journal article" date="2009" name="Mol. Cell. Proteomics">
        <title>The mouse C2C12 myoblast cell surface N-linked glycoproteome: identification, glycosite occupancy, and membrane orientation.</title>
        <authorList>
            <person name="Gundry R.L."/>
            <person name="Raginski K."/>
            <person name="Tarasova Y."/>
            <person name="Tchernyshyov I."/>
            <person name="Bausch-Fluck D."/>
            <person name="Elliott S.T."/>
            <person name="Boheler K.R."/>
            <person name="Van Eyk J.E."/>
            <person name="Wollscheid B."/>
        </authorList>
    </citation>
    <scope>GLYCOSYLATION [LARGE SCALE ANALYSIS] AT ASN-106; ASN-128; ASN-606; ASN-784 AND ASN-817</scope>
    <source>
        <tissue>Myoblast</tissue>
    </source>
</reference>
<reference key="7">
    <citation type="journal article" date="2009" name="Nat. Biotechnol.">
        <title>Mass-spectrometric identification and relative quantification of N-linked cell surface glycoproteins.</title>
        <authorList>
            <person name="Wollscheid B."/>
            <person name="Bausch-Fluck D."/>
            <person name="Henderson C."/>
            <person name="O'Brien R."/>
            <person name="Bibel M."/>
            <person name="Schiess R."/>
            <person name="Aebersold R."/>
            <person name="Watts J.D."/>
        </authorList>
    </citation>
    <scope>GLYCOSYLATION [LARGE SCALE ANALYSIS] AT ASN-106; ASN-114; ASN-332; ASN-606; ASN-784 AND ASN-817</scope>
</reference>
<reference key="8">
    <citation type="journal article" date="2010" name="Cell">
        <title>A tissue-specific atlas of mouse protein phosphorylation and expression.</title>
        <authorList>
            <person name="Huttlin E.L."/>
            <person name="Jedrychowski M.P."/>
            <person name="Elias J.E."/>
            <person name="Goswami T."/>
            <person name="Rad R."/>
            <person name="Beausoleil S.A."/>
            <person name="Villen J."/>
            <person name="Haas W."/>
            <person name="Sowa M.E."/>
            <person name="Gygi S.P."/>
        </authorList>
    </citation>
    <scope>IDENTIFICATION BY MASS SPECTROMETRY [LARGE SCALE ANALYSIS]</scope>
    <source>
        <tissue>Brain</tissue>
        <tissue>Brown adipose tissue</tissue>
        <tissue>Heart</tissue>
        <tissue>Kidney</tissue>
        <tissue>Liver</tissue>
        <tissue>Lung</tissue>
        <tissue>Pancreas</tissue>
        <tissue>Spleen</tissue>
        <tissue>Testis</tissue>
    </source>
</reference>
<reference key="9">
    <citation type="journal article" date="2012" name="Biochem. J.">
        <title>Intestinal peptidases form functional complexes with the neutral amino acid transporter B(0)AT1.</title>
        <authorList>
            <person name="Fairweather S.J."/>
            <person name="Broeer A."/>
            <person name="O'Mara M.L."/>
            <person name="Broeer S."/>
        </authorList>
    </citation>
    <scope>FUNCTION</scope>
    <scope>INTERACTION WITH SLC6A19</scope>
    <scope>TISSUE SPECIFICITY</scope>
    <scope>MUTAGENESIS OF GLU-354; GLU-388; GLU-410 AND TYR-476</scope>
</reference>
<evidence type="ECO:0000250" key="1">
    <source>
        <dbReference type="UniProtKB" id="P15144"/>
    </source>
</evidence>
<evidence type="ECO:0000250" key="2">
    <source>
        <dbReference type="UniProtKB" id="P15145"/>
    </source>
</evidence>
<evidence type="ECO:0000255" key="3"/>
<evidence type="ECO:0000255" key="4">
    <source>
        <dbReference type="PROSITE-ProRule" id="PRU10095"/>
    </source>
</evidence>
<evidence type="ECO:0000256" key="5">
    <source>
        <dbReference type="SAM" id="MobiDB-lite"/>
    </source>
</evidence>
<evidence type="ECO:0000269" key="6">
    <source>
    </source>
</evidence>
<evidence type="ECO:0000269" key="7">
    <source>
    </source>
</evidence>
<evidence type="ECO:0000269" key="8">
    <source>
    </source>
</evidence>
<evidence type="ECO:0000269" key="9">
    <source>
    </source>
</evidence>
<evidence type="ECO:0000269" key="10">
    <source>
    </source>
</evidence>
<evidence type="ECO:0000269" key="11">
    <source>
    </source>
</evidence>
<evidence type="ECO:0000305" key="12"/>
<evidence type="ECO:0007744" key="13">
    <source>
    </source>
</evidence>
<gene>
    <name type="primary">Anpep</name>
    <name type="synonym">Lap-1</name>
    <name type="synonym">Lap1</name>
</gene>
<feature type="chain" id="PRO_0000095082" description="Aminopeptidase N">
    <location>
        <begin position="1"/>
        <end position="966"/>
    </location>
</feature>
<feature type="topological domain" description="Cytoplasmic" evidence="1">
    <location>
        <begin position="1"/>
        <end position="8"/>
    </location>
</feature>
<feature type="transmembrane region" description="Helical; Signal-anchor for type II membrane protein" evidence="3">
    <location>
        <begin position="9"/>
        <end position="32"/>
    </location>
</feature>
<feature type="topological domain" description="Extracellular" evidence="1">
    <location>
        <begin position="33"/>
        <end position="966"/>
    </location>
</feature>
<feature type="region of interest" description="Cytosolic Ser/Thr-rich junction">
    <location>
        <begin position="33"/>
        <end position="68"/>
    </location>
</feature>
<feature type="region of interest" description="Disordered" evidence="5">
    <location>
        <begin position="42"/>
        <end position="64"/>
    </location>
</feature>
<feature type="region of interest" description="Metalloprotease">
    <location>
        <begin position="69"/>
        <end position="966"/>
    </location>
</feature>
<feature type="compositionally biased region" description="Low complexity" evidence="5">
    <location>
        <begin position="44"/>
        <end position="64"/>
    </location>
</feature>
<feature type="active site" description="Proton acceptor" evidence="4">
    <location>
        <position position="388"/>
    </location>
</feature>
<feature type="binding site" evidence="1">
    <location>
        <begin position="351"/>
        <end position="355"/>
    </location>
    <ligand>
        <name>substrate</name>
    </ligand>
</feature>
<feature type="binding site" evidence="4">
    <location>
        <position position="387"/>
    </location>
    <ligand>
        <name>Zn(2+)</name>
        <dbReference type="ChEBI" id="CHEBI:29105"/>
        <note>catalytic</note>
    </ligand>
</feature>
<feature type="binding site" evidence="4">
    <location>
        <position position="391"/>
    </location>
    <ligand>
        <name>Zn(2+)</name>
        <dbReference type="ChEBI" id="CHEBI:29105"/>
        <note>catalytic</note>
    </ligand>
</feature>
<feature type="binding site" evidence="4">
    <location>
        <position position="410"/>
    </location>
    <ligand>
        <name>Zn(2+)</name>
        <dbReference type="ChEBI" id="CHEBI:29105"/>
        <note>catalytic</note>
    </ligand>
</feature>
<feature type="site" description="Transition state stabilizer" evidence="1">
    <location>
        <position position="476"/>
    </location>
</feature>
<feature type="modified residue" description="Sulfotyrosine" evidence="3">
    <location>
        <position position="176"/>
    </location>
</feature>
<feature type="modified residue" description="Sulfotyrosine" evidence="3">
    <location>
        <position position="418"/>
    </location>
</feature>
<feature type="modified residue" description="Sulfotyrosine" evidence="3">
    <location>
        <position position="423"/>
    </location>
</feature>
<feature type="modified residue" description="Phosphotyrosine" evidence="13">
    <location>
        <position position="852"/>
    </location>
</feature>
<feature type="glycosylation site" description="N-linked (GlcNAc...) asparagine" evidence="6 7">
    <location>
        <position position="106"/>
    </location>
</feature>
<feature type="glycosylation site" description="N-linked (GlcNAc...) asparagine" evidence="6">
    <location>
        <position position="114"/>
    </location>
</feature>
<feature type="glycosylation site" description="N-linked (GlcNAc...) asparagine" evidence="7">
    <location>
        <position position="128"/>
    </location>
</feature>
<feature type="glycosylation site" description="N-linked (GlcNAc...) asparagine" evidence="3">
    <location>
        <position position="234"/>
    </location>
</feature>
<feature type="glycosylation site" description="N-linked (GlcNAc...) asparagine" evidence="3">
    <location>
        <position position="288"/>
    </location>
</feature>
<feature type="glycosylation site" description="N-linked (GlcNAc...) asparagine" evidence="3">
    <location>
        <position position="318"/>
    </location>
</feature>
<feature type="glycosylation site" description="N-linked (GlcNAc...) asparagine" evidence="6">
    <location>
        <position position="332"/>
    </location>
</feature>
<feature type="glycosylation site" description="N-linked (GlcNAc...) asparagine" evidence="3">
    <location>
        <position position="573"/>
    </location>
</feature>
<feature type="glycosylation site" description="N-linked (GlcNAc...) asparagine" evidence="6 7">
    <location>
        <position position="606"/>
    </location>
</feature>
<feature type="glycosylation site" description="N-linked (GlcNAc...) asparagine" evidence="3">
    <location>
        <position position="624"/>
    </location>
</feature>
<feature type="glycosylation site" description="N-linked (GlcNAc...) asparagine" evidence="3">
    <location>
        <position position="734"/>
    </location>
</feature>
<feature type="glycosylation site" description="N-linked (GlcNAc...) asparagine" evidence="6 7">
    <location>
        <position position="784"/>
    </location>
</feature>
<feature type="glycosylation site" description="N-linked (GlcNAc...) asparagine" evidence="6 7">
    <location>
        <position position="817"/>
    </location>
</feature>
<feature type="disulfide bond" evidence="1">
    <location>
        <begin position="760"/>
        <end position="767"/>
    </location>
</feature>
<feature type="disulfide bond" evidence="1">
    <location>
        <begin position="797"/>
        <end position="833"/>
    </location>
</feature>
<feature type="mutagenesis site" description="Reduces substrate affinity of SLC6A19-mediated amino acid transport." evidence="8">
    <original>E</original>
    <variation>A</variation>
    <location>
        <position position="354"/>
    </location>
</feature>
<feature type="mutagenesis site" description="No impact on substrate affinity of SLC6A19-mediated amino acid transport." evidence="8">
    <original>E</original>
    <variation>A</variation>
    <location>
        <position position="388"/>
    </location>
</feature>
<feature type="mutagenesis site" description="Reduces substrate affinity of SLC6A19-mediated amino acid transport." evidence="8">
    <original>E</original>
    <variation>A</variation>
    <location>
        <position position="410"/>
    </location>
</feature>
<feature type="mutagenesis site" description="No impact on substrate affinity of SLC6A19-mediated amino acid transport." evidence="8">
    <original>Y</original>
    <variation>F</variation>
    <location>
        <position position="476"/>
    </location>
</feature>
<feature type="sequence conflict" description="In Ref. 2; AAH17011/AAH40792." evidence="12" ref="2">
    <original>T</original>
    <variation>TATTTATTT</variation>
    <location>
        <position position="62"/>
    </location>
</feature>
<feature type="sequence conflict" description="In Ref. 1; AAB19065." evidence="12" ref="1">
    <original>S</original>
    <variation>A</variation>
    <location>
        <position position="84"/>
    </location>
</feature>
<feature type="sequence conflict" description="In Ref. 2; AAH17011/AAH40792." evidence="12" ref="2">
    <original>N</original>
    <variation>S</variation>
    <location>
        <position position="106"/>
    </location>
</feature>
<feature type="sequence conflict" description="In Ref. 2; AAH17011/AAH40792." evidence="12" ref="2">
    <original>Q</original>
    <variation>E</variation>
    <location>
        <position position="181"/>
    </location>
</feature>
<feature type="sequence conflict" description="In Ref. 2; AAH17011/AAH40792." evidence="12" ref="2">
    <original>D</original>
    <variation>G</variation>
    <location>
        <position position="202"/>
    </location>
</feature>
<feature type="sequence conflict" description="In Ref. 2; AAH17011/AAH40792." evidence="12" ref="2">
    <original>P</original>
    <variation>L</variation>
    <location>
        <position position="532"/>
    </location>
</feature>
<feature type="sequence conflict" description="In Ref. 2; AAH17011/AAH40792." evidence="12" ref="2">
    <original>N</original>
    <variation>S</variation>
    <location>
        <position position="557"/>
    </location>
</feature>
<feature type="sequence conflict" description="In Ref. 1; AA sequence." evidence="12" ref="1">
    <location>
        <position position="557"/>
    </location>
</feature>
<feature type="sequence conflict" description="In Ref. 2; AAH17011/AAH40792." evidence="12" ref="2">
    <original>A</original>
    <variation>T</variation>
    <location>
        <position position="689"/>
    </location>
</feature>
<feature type="sequence conflict" description="In Ref. 2; AAH17011/AAH40792." evidence="12" ref="2">
    <original>T</original>
    <variation>M</variation>
    <location>
        <position position="726"/>
    </location>
</feature>
<feature type="sequence conflict" description="In Ref. 2; AAH17011/AAH40792." evidence="12" ref="2">
    <original>S</original>
    <variation>G</variation>
    <location>
        <position position="966"/>
    </location>
</feature>
<keyword id="KW-0031">Aminopeptidase</keyword>
<keyword id="KW-0037">Angiogenesis</keyword>
<keyword id="KW-1003">Cell membrane</keyword>
<keyword id="KW-0217">Developmental protein</keyword>
<keyword id="KW-0221">Differentiation</keyword>
<keyword id="KW-0903">Direct protein sequencing</keyword>
<keyword id="KW-1015">Disulfide bond</keyword>
<keyword id="KW-0325">Glycoprotein</keyword>
<keyword id="KW-0378">Hydrolase</keyword>
<keyword id="KW-0472">Membrane</keyword>
<keyword id="KW-0479">Metal-binding</keyword>
<keyword id="KW-0482">Metalloprotease</keyword>
<keyword id="KW-0597">Phosphoprotein</keyword>
<keyword id="KW-0645">Protease</keyword>
<keyword id="KW-1185">Reference proteome</keyword>
<keyword id="KW-0735">Signal-anchor</keyword>
<keyword id="KW-0765">Sulfation</keyword>
<keyword id="KW-0812">Transmembrane</keyword>
<keyword id="KW-1133">Transmembrane helix</keyword>
<keyword id="KW-0862">Zinc</keyword>
<proteinExistence type="evidence at protein level"/>
<name>AMPN_MOUSE</name>